<dbReference type="EC" id="3.6.1.66" evidence="1"/>
<dbReference type="EMBL" id="CP000046">
    <property type="protein sequence ID" value="AAW36541.1"/>
    <property type="molecule type" value="Genomic_DNA"/>
</dbReference>
<dbReference type="RefSeq" id="WP_000659317.1">
    <property type="nucleotide sequence ID" value="NZ_JBGOFO010000002.1"/>
</dbReference>
<dbReference type="SMR" id="Q5HGT2"/>
<dbReference type="KEGG" id="sac:SACOL1162"/>
<dbReference type="HOGENOM" id="CLU_082080_0_2_9"/>
<dbReference type="Proteomes" id="UP000000530">
    <property type="component" value="Chromosome"/>
</dbReference>
<dbReference type="GO" id="GO:0005829">
    <property type="term" value="C:cytosol"/>
    <property type="evidence" value="ECO:0007669"/>
    <property type="project" value="TreeGrafter"/>
</dbReference>
<dbReference type="GO" id="GO:0035870">
    <property type="term" value="F:dITP diphosphatase activity"/>
    <property type="evidence" value="ECO:0007669"/>
    <property type="project" value="RHEA"/>
</dbReference>
<dbReference type="GO" id="GO:0036220">
    <property type="term" value="F:ITP diphosphatase activity"/>
    <property type="evidence" value="ECO:0007669"/>
    <property type="project" value="UniProtKB-EC"/>
</dbReference>
<dbReference type="GO" id="GO:0046872">
    <property type="term" value="F:metal ion binding"/>
    <property type="evidence" value="ECO:0007669"/>
    <property type="project" value="UniProtKB-KW"/>
</dbReference>
<dbReference type="GO" id="GO:0000166">
    <property type="term" value="F:nucleotide binding"/>
    <property type="evidence" value="ECO:0007669"/>
    <property type="project" value="UniProtKB-KW"/>
</dbReference>
<dbReference type="GO" id="GO:0017111">
    <property type="term" value="F:ribonucleoside triphosphate phosphatase activity"/>
    <property type="evidence" value="ECO:0007669"/>
    <property type="project" value="InterPro"/>
</dbReference>
<dbReference type="GO" id="GO:0036222">
    <property type="term" value="F:XTP diphosphatase activity"/>
    <property type="evidence" value="ECO:0007669"/>
    <property type="project" value="RHEA"/>
</dbReference>
<dbReference type="GO" id="GO:0009117">
    <property type="term" value="P:nucleotide metabolic process"/>
    <property type="evidence" value="ECO:0007669"/>
    <property type="project" value="UniProtKB-KW"/>
</dbReference>
<dbReference type="GO" id="GO:0009146">
    <property type="term" value="P:purine nucleoside triphosphate catabolic process"/>
    <property type="evidence" value="ECO:0007669"/>
    <property type="project" value="UniProtKB-UniRule"/>
</dbReference>
<dbReference type="CDD" id="cd00515">
    <property type="entry name" value="HAM1"/>
    <property type="match status" value="1"/>
</dbReference>
<dbReference type="FunFam" id="3.90.950.10:FF:000001">
    <property type="entry name" value="dITP/XTP pyrophosphatase"/>
    <property type="match status" value="1"/>
</dbReference>
<dbReference type="Gene3D" id="3.90.950.10">
    <property type="match status" value="1"/>
</dbReference>
<dbReference type="HAMAP" id="MF_01405">
    <property type="entry name" value="Non_canon_purine_NTPase"/>
    <property type="match status" value="1"/>
</dbReference>
<dbReference type="InterPro" id="IPR020922">
    <property type="entry name" value="dITP/XTP_pyrophosphatase"/>
</dbReference>
<dbReference type="InterPro" id="IPR029001">
    <property type="entry name" value="ITPase-like_fam"/>
</dbReference>
<dbReference type="InterPro" id="IPR002637">
    <property type="entry name" value="RdgB/HAM1"/>
</dbReference>
<dbReference type="NCBIfam" id="NF011397">
    <property type="entry name" value="PRK14822.1"/>
    <property type="match status" value="1"/>
</dbReference>
<dbReference type="NCBIfam" id="TIGR00042">
    <property type="entry name" value="RdgB/HAM1 family non-canonical purine NTP pyrophosphatase"/>
    <property type="match status" value="1"/>
</dbReference>
<dbReference type="PANTHER" id="PTHR11067:SF9">
    <property type="entry name" value="INOSINE TRIPHOSPHATE PYROPHOSPHATASE"/>
    <property type="match status" value="1"/>
</dbReference>
<dbReference type="PANTHER" id="PTHR11067">
    <property type="entry name" value="INOSINE TRIPHOSPHATE PYROPHOSPHATASE/HAM1 PROTEIN"/>
    <property type="match status" value="1"/>
</dbReference>
<dbReference type="Pfam" id="PF01725">
    <property type="entry name" value="Ham1p_like"/>
    <property type="match status" value="1"/>
</dbReference>
<dbReference type="SUPFAM" id="SSF52972">
    <property type="entry name" value="ITPase-like"/>
    <property type="match status" value="1"/>
</dbReference>
<name>IXTPA_STAAC</name>
<gene>
    <name type="ordered locus">SACOL1162</name>
</gene>
<organism>
    <name type="scientific">Staphylococcus aureus (strain COL)</name>
    <dbReference type="NCBI Taxonomy" id="93062"/>
    <lineage>
        <taxon>Bacteria</taxon>
        <taxon>Bacillati</taxon>
        <taxon>Bacillota</taxon>
        <taxon>Bacilli</taxon>
        <taxon>Bacillales</taxon>
        <taxon>Staphylococcaceae</taxon>
        <taxon>Staphylococcus</taxon>
    </lineage>
</organism>
<evidence type="ECO:0000255" key="1">
    <source>
        <dbReference type="HAMAP-Rule" id="MF_01405"/>
    </source>
</evidence>
<feature type="chain" id="PRO_0000178227" description="dITP/XTP pyrophosphatase">
    <location>
        <begin position="1"/>
        <end position="195"/>
    </location>
</feature>
<feature type="active site" description="Proton acceptor" evidence="1">
    <location>
        <position position="68"/>
    </location>
</feature>
<feature type="binding site" evidence="1">
    <location>
        <begin position="8"/>
        <end position="13"/>
    </location>
    <ligand>
        <name>substrate</name>
    </ligand>
</feature>
<feature type="binding site" evidence="1">
    <location>
        <position position="39"/>
    </location>
    <ligand>
        <name>Mg(2+)</name>
        <dbReference type="ChEBI" id="CHEBI:18420"/>
    </ligand>
</feature>
<feature type="binding site" evidence="1">
    <location>
        <position position="68"/>
    </location>
    <ligand>
        <name>Mg(2+)</name>
        <dbReference type="ChEBI" id="CHEBI:18420"/>
    </ligand>
</feature>
<feature type="binding site" evidence="1">
    <location>
        <position position="69"/>
    </location>
    <ligand>
        <name>substrate</name>
    </ligand>
</feature>
<feature type="binding site" evidence="1">
    <location>
        <begin position="149"/>
        <end position="152"/>
    </location>
    <ligand>
        <name>substrate</name>
    </ligand>
</feature>
<feature type="binding site" evidence="1">
    <location>
        <position position="172"/>
    </location>
    <ligand>
        <name>substrate</name>
    </ligand>
</feature>
<feature type="binding site" evidence="1">
    <location>
        <begin position="177"/>
        <end position="178"/>
    </location>
    <ligand>
        <name>substrate</name>
    </ligand>
</feature>
<comment type="function">
    <text evidence="1">Pyrophosphatase that catalyzes the hydrolysis of nucleoside triphosphates to their monophosphate derivatives, with a high preference for the non-canonical purine nucleotides XTP (xanthosine triphosphate), dITP (deoxyinosine triphosphate) and ITP. Seems to function as a house-cleaning enzyme that removes non-canonical purine nucleotides from the nucleotide pool, thus preventing their incorporation into DNA/RNA and avoiding chromosomal lesions.</text>
</comment>
<comment type="catalytic activity">
    <reaction evidence="1">
        <text>XTP + H2O = XMP + diphosphate + H(+)</text>
        <dbReference type="Rhea" id="RHEA:28610"/>
        <dbReference type="ChEBI" id="CHEBI:15377"/>
        <dbReference type="ChEBI" id="CHEBI:15378"/>
        <dbReference type="ChEBI" id="CHEBI:33019"/>
        <dbReference type="ChEBI" id="CHEBI:57464"/>
        <dbReference type="ChEBI" id="CHEBI:61314"/>
        <dbReference type="EC" id="3.6.1.66"/>
    </reaction>
</comment>
<comment type="catalytic activity">
    <reaction evidence="1">
        <text>dITP + H2O = dIMP + diphosphate + H(+)</text>
        <dbReference type="Rhea" id="RHEA:28342"/>
        <dbReference type="ChEBI" id="CHEBI:15377"/>
        <dbReference type="ChEBI" id="CHEBI:15378"/>
        <dbReference type="ChEBI" id="CHEBI:33019"/>
        <dbReference type="ChEBI" id="CHEBI:61194"/>
        <dbReference type="ChEBI" id="CHEBI:61382"/>
        <dbReference type="EC" id="3.6.1.66"/>
    </reaction>
</comment>
<comment type="catalytic activity">
    <reaction evidence="1">
        <text>ITP + H2O = IMP + diphosphate + H(+)</text>
        <dbReference type="Rhea" id="RHEA:29399"/>
        <dbReference type="ChEBI" id="CHEBI:15377"/>
        <dbReference type="ChEBI" id="CHEBI:15378"/>
        <dbReference type="ChEBI" id="CHEBI:33019"/>
        <dbReference type="ChEBI" id="CHEBI:58053"/>
        <dbReference type="ChEBI" id="CHEBI:61402"/>
        <dbReference type="EC" id="3.6.1.66"/>
    </reaction>
</comment>
<comment type="cofactor">
    <cofactor evidence="1">
        <name>Mg(2+)</name>
        <dbReference type="ChEBI" id="CHEBI:18420"/>
    </cofactor>
    <text evidence="1">Binds 1 Mg(2+) ion per subunit.</text>
</comment>
<comment type="subunit">
    <text evidence="1">Homodimer.</text>
</comment>
<comment type="similarity">
    <text evidence="1">Belongs to the HAM1 NTPase family.</text>
</comment>
<reference key="1">
    <citation type="journal article" date="2005" name="J. Bacteriol.">
        <title>Insights on evolution of virulence and resistance from the complete genome analysis of an early methicillin-resistant Staphylococcus aureus strain and a biofilm-producing methicillin-resistant Staphylococcus epidermidis strain.</title>
        <authorList>
            <person name="Gill S.R."/>
            <person name="Fouts D.E."/>
            <person name="Archer G.L."/>
            <person name="Mongodin E.F."/>
            <person name="DeBoy R.T."/>
            <person name="Ravel J."/>
            <person name="Paulsen I.T."/>
            <person name="Kolonay J.F."/>
            <person name="Brinkac L.M."/>
            <person name="Beanan M.J."/>
            <person name="Dodson R.J."/>
            <person name="Daugherty S.C."/>
            <person name="Madupu R."/>
            <person name="Angiuoli S.V."/>
            <person name="Durkin A.S."/>
            <person name="Haft D.H."/>
            <person name="Vamathevan J.J."/>
            <person name="Khouri H."/>
            <person name="Utterback T.R."/>
            <person name="Lee C."/>
            <person name="Dimitrov G."/>
            <person name="Jiang L."/>
            <person name="Qin H."/>
            <person name="Weidman J."/>
            <person name="Tran K."/>
            <person name="Kang K.H."/>
            <person name="Hance I.R."/>
            <person name="Nelson K.E."/>
            <person name="Fraser C.M."/>
        </authorList>
    </citation>
    <scope>NUCLEOTIDE SEQUENCE [LARGE SCALE GENOMIC DNA]</scope>
    <source>
        <strain>COL</strain>
    </source>
</reference>
<protein>
    <recommendedName>
        <fullName evidence="1">dITP/XTP pyrophosphatase</fullName>
        <ecNumber evidence="1">3.6.1.66</ecNumber>
    </recommendedName>
    <alternativeName>
        <fullName evidence="1">Non-canonical purine NTP pyrophosphatase</fullName>
    </alternativeName>
    <alternativeName>
        <fullName evidence="1">Non-standard purine NTP pyrophosphatase</fullName>
    </alternativeName>
    <alternativeName>
        <fullName evidence="1">Nucleoside-triphosphate diphosphatase</fullName>
    </alternativeName>
    <alternativeName>
        <fullName evidence="1">Nucleoside-triphosphate pyrophosphatase</fullName>
        <shortName evidence="1">NTPase</shortName>
    </alternativeName>
</protein>
<sequence length="195" mass="21403">MKEIVIASNNQGKINDFKVIFPDYHVIGISELIPDFDVEETGSTFEENAILKSEAAAKALNKTVIADDSGLEVFALNGEPGIYSARYAGENKSDEANIEKLLNKLGNTTDRRAQFVCVISMSGPDMETKVFKGTVSGEIADGKYGENGFGYDPIFYVPKLDKTMAQLSKEQKGQISHRRNAINLLQAFLEGDKNV</sequence>
<proteinExistence type="inferred from homology"/>
<accession>Q5HGT2</accession>
<keyword id="KW-0378">Hydrolase</keyword>
<keyword id="KW-0460">Magnesium</keyword>
<keyword id="KW-0479">Metal-binding</keyword>
<keyword id="KW-0546">Nucleotide metabolism</keyword>
<keyword id="KW-0547">Nucleotide-binding</keyword>